<evidence type="ECO:0000255" key="1">
    <source>
        <dbReference type="HAMAP-Rule" id="MF_00588"/>
    </source>
</evidence>
<protein>
    <recommendedName>
        <fullName evidence="1">Glutamyl-tRNA(Gln) amidotransferase subunit E</fullName>
        <shortName evidence="1">Glu-ADT subunit E</shortName>
        <ecNumber evidence="1">6.3.5.-</ecNumber>
    </recommendedName>
</protein>
<sequence length="623" mass="67594">MTEYDYEELGLVAGLEIHQQLDTATKLFCDCPTTIREPEESDRSFTRYLHPTKSELGEIDEAALEESMVDREFEYLAYDTTCLVEEDDEPPHRVDREAMETTLEIAQLLDMSVADQVNIMRKIVVDGSNTTGFQRSMLVANDGAIETSAGPVGVEDMLLEEESCQRIEETEDGVRFSLDRLGIPLVEIGTKPDISSPEQAREAAERIGMLLRSTGKVKRGLGTIRQDVNVSIEEGARIELKGVQSLDDIDDLVRNEVRRQVELLDIAEELAERGATVGEPQDVTEVFEDTDSGVIEGALSSGGKVQGLLLSGFDGLVGREIQPDRRLGTELSDHAKRHGAGGIFHTDELPAYGVTEAEVEALRDAVGAGSEDAVAIVADDPETAELAIDAVAERAETALAGVPEETRDANEDATSRYLRPLPGAARMYPETDVPPVEPDVTEVETPELLTEKVDRYESEFDLGSGLAEQVAYGQRWPLFEALVAGEGVDPTLAAGTLESTLTELRRDDVPVENLTDKHLQGAILLVDGGDVPREGMEDLLTALAENPSLTAEEAVEQEGLGGVDESEVRDAVAEVVERHEDQVAEEGMGAFSALMGECMGALRGKADGDTVSDVLRSEIQKRA</sequence>
<gene>
    <name evidence="1" type="primary">gatE</name>
    <name type="ordered locus">rrnAC0023</name>
</gene>
<accession>Q5V5U5</accession>
<comment type="function">
    <text evidence="1">Allows the formation of correctly charged Gln-tRNA(Gln) through the transamidation of misacylated Glu-tRNA(Gln) in organisms which lack glutaminyl-tRNA synthetase. The reaction takes place in the presence of glutamine and ATP through an activated gamma-phospho-Glu-tRNA(Gln). The GatDE system is specific for glutamate and does not act on aspartate.</text>
</comment>
<comment type="catalytic activity">
    <reaction evidence="1">
        <text>L-glutamyl-tRNA(Gln) + L-glutamine + ATP + H2O = L-glutaminyl-tRNA(Gln) + L-glutamate + ADP + phosphate + H(+)</text>
        <dbReference type="Rhea" id="RHEA:17521"/>
        <dbReference type="Rhea" id="RHEA-COMP:9681"/>
        <dbReference type="Rhea" id="RHEA-COMP:9684"/>
        <dbReference type="ChEBI" id="CHEBI:15377"/>
        <dbReference type="ChEBI" id="CHEBI:15378"/>
        <dbReference type="ChEBI" id="CHEBI:29985"/>
        <dbReference type="ChEBI" id="CHEBI:30616"/>
        <dbReference type="ChEBI" id="CHEBI:43474"/>
        <dbReference type="ChEBI" id="CHEBI:58359"/>
        <dbReference type="ChEBI" id="CHEBI:78520"/>
        <dbReference type="ChEBI" id="CHEBI:78521"/>
        <dbReference type="ChEBI" id="CHEBI:456216"/>
    </reaction>
</comment>
<comment type="subunit">
    <text evidence="1">Heterodimer of GatD and GatE.</text>
</comment>
<comment type="similarity">
    <text evidence="1">Belongs to the GatB/GatE family. GatE subfamily.</text>
</comment>
<keyword id="KW-0067">ATP-binding</keyword>
<keyword id="KW-0436">Ligase</keyword>
<keyword id="KW-0547">Nucleotide-binding</keyword>
<keyword id="KW-0648">Protein biosynthesis</keyword>
<keyword id="KW-1185">Reference proteome</keyword>
<organism>
    <name type="scientific">Haloarcula marismortui (strain ATCC 43049 / DSM 3752 / JCM 8966 / VKM B-1809)</name>
    <name type="common">Halobacterium marismortui</name>
    <dbReference type="NCBI Taxonomy" id="272569"/>
    <lineage>
        <taxon>Archaea</taxon>
        <taxon>Methanobacteriati</taxon>
        <taxon>Methanobacteriota</taxon>
        <taxon>Stenosarchaea group</taxon>
        <taxon>Halobacteria</taxon>
        <taxon>Halobacteriales</taxon>
        <taxon>Haloarculaceae</taxon>
        <taxon>Haloarcula</taxon>
    </lineage>
</organism>
<reference key="1">
    <citation type="journal article" date="2004" name="Genome Res.">
        <title>Genome sequence of Haloarcula marismortui: a halophilic archaeon from the Dead Sea.</title>
        <authorList>
            <person name="Baliga N.S."/>
            <person name="Bonneau R."/>
            <person name="Facciotti M.T."/>
            <person name="Pan M."/>
            <person name="Glusman G."/>
            <person name="Deutsch E.W."/>
            <person name="Shannon P."/>
            <person name="Chiu Y."/>
            <person name="Weng R.S."/>
            <person name="Gan R.R."/>
            <person name="Hung P."/>
            <person name="Date S.V."/>
            <person name="Marcotte E."/>
            <person name="Hood L."/>
            <person name="Ng W.V."/>
        </authorList>
    </citation>
    <scope>NUCLEOTIDE SEQUENCE [LARGE SCALE GENOMIC DNA]</scope>
    <source>
        <strain>ATCC 43049 / DSM 3752 / JCM 8966 / VKM B-1809</strain>
    </source>
</reference>
<dbReference type="EC" id="6.3.5.-" evidence="1"/>
<dbReference type="EMBL" id="AY596297">
    <property type="protein sequence ID" value="AAV45107.1"/>
    <property type="molecule type" value="Genomic_DNA"/>
</dbReference>
<dbReference type="RefSeq" id="WP_011222783.1">
    <property type="nucleotide sequence ID" value="NC_006396.1"/>
</dbReference>
<dbReference type="SMR" id="Q5V5U5"/>
<dbReference type="STRING" id="272569.rrnAC0023"/>
<dbReference type="PaxDb" id="272569-rrnAC0023"/>
<dbReference type="EnsemblBacteria" id="AAV45107">
    <property type="protein sequence ID" value="AAV45107"/>
    <property type="gene ID" value="rrnAC0023"/>
</dbReference>
<dbReference type="GeneID" id="40154341"/>
<dbReference type="KEGG" id="hma:rrnAC0023"/>
<dbReference type="PATRIC" id="fig|272569.17.peg.836"/>
<dbReference type="eggNOG" id="arCOG01719">
    <property type="taxonomic scope" value="Archaea"/>
</dbReference>
<dbReference type="HOGENOM" id="CLU_030702_0_0_2"/>
<dbReference type="Proteomes" id="UP000001169">
    <property type="component" value="Chromosome I"/>
</dbReference>
<dbReference type="GO" id="GO:0005737">
    <property type="term" value="C:cytoplasm"/>
    <property type="evidence" value="ECO:0007669"/>
    <property type="project" value="InterPro"/>
</dbReference>
<dbReference type="GO" id="GO:0004812">
    <property type="term" value="F:aminoacyl-tRNA ligase activity"/>
    <property type="evidence" value="ECO:0007669"/>
    <property type="project" value="InterPro"/>
</dbReference>
<dbReference type="GO" id="GO:0005524">
    <property type="term" value="F:ATP binding"/>
    <property type="evidence" value="ECO:0007669"/>
    <property type="project" value="UniProtKB-KW"/>
</dbReference>
<dbReference type="GO" id="GO:0050567">
    <property type="term" value="F:glutaminyl-tRNA synthase (glutamine-hydrolyzing) activity"/>
    <property type="evidence" value="ECO:0007669"/>
    <property type="project" value="UniProtKB-UniRule"/>
</dbReference>
<dbReference type="GO" id="GO:0070681">
    <property type="term" value="P:glutaminyl-tRNAGln biosynthesis via transamidation"/>
    <property type="evidence" value="ECO:0007669"/>
    <property type="project" value="TreeGrafter"/>
</dbReference>
<dbReference type="GO" id="GO:0006412">
    <property type="term" value="P:translation"/>
    <property type="evidence" value="ECO:0007669"/>
    <property type="project" value="UniProtKB-UniRule"/>
</dbReference>
<dbReference type="FunFam" id="1.10.10.410:FF:000003">
    <property type="entry name" value="Glutamyl-tRNA(Gln) amidotransferase subunit E"/>
    <property type="match status" value="1"/>
</dbReference>
<dbReference type="FunFam" id="3.30.1360.30:FF:000003">
    <property type="entry name" value="Glutamyl-tRNA(Gln) amidotransferase subunit E"/>
    <property type="match status" value="1"/>
</dbReference>
<dbReference type="Gene3D" id="1.10.10.410">
    <property type="match status" value="1"/>
</dbReference>
<dbReference type="Gene3D" id="3.30.1360.30">
    <property type="entry name" value="GAD-like domain"/>
    <property type="match status" value="1"/>
</dbReference>
<dbReference type="Gene3D" id="1.10.150.380">
    <property type="entry name" value="GatB domain, N-terminal subdomain"/>
    <property type="match status" value="1"/>
</dbReference>
<dbReference type="HAMAP" id="MF_00588">
    <property type="entry name" value="GatE"/>
    <property type="match status" value="1"/>
</dbReference>
<dbReference type="InterPro" id="IPR017959">
    <property type="entry name" value="Asn/Gln-tRNA_amidoTrfase_suB/E"/>
</dbReference>
<dbReference type="InterPro" id="IPR006075">
    <property type="entry name" value="Asn/Gln-tRNA_Trfase_suB/E_cat"/>
</dbReference>
<dbReference type="InterPro" id="IPR018027">
    <property type="entry name" value="Asn/Gln_amidotransferase"/>
</dbReference>
<dbReference type="InterPro" id="IPR003789">
    <property type="entry name" value="Asn/Gln_tRNA_amidoTrase-B-like"/>
</dbReference>
<dbReference type="InterPro" id="IPR004115">
    <property type="entry name" value="GAD-like_sf"/>
</dbReference>
<dbReference type="InterPro" id="IPR029351">
    <property type="entry name" value="GAD_dom"/>
</dbReference>
<dbReference type="InterPro" id="IPR042114">
    <property type="entry name" value="GatB_C_1"/>
</dbReference>
<dbReference type="InterPro" id="IPR023168">
    <property type="entry name" value="GatB_Yqey_C_2"/>
</dbReference>
<dbReference type="InterPro" id="IPR004414">
    <property type="entry name" value="GatE"/>
</dbReference>
<dbReference type="InterPro" id="IPR017958">
    <property type="entry name" value="Gln-tRNA_amidoTrfase_suB_CS"/>
</dbReference>
<dbReference type="InterPro" id="IPR014746">
    <property type="entry name" value="Gln_synth/guanido_kin_cat_dom"/>
</dbReference>
<dbReference type="NCBIfam" id="TIGR00134">
    <property type="entry name" value="gatE_arch"/>
    <property type="match status" value="1"/>
</dbReference>
<dbReference type="NCBIfam" id="NF003107">
    <property type="entry name" value="PRK04028.1"/>
    <property type="match status" value="1"/>
</dbReference>
<dbReference type="PANTHER" id="PTHR11659">
    <property type="entry name" value="GLUTAMYL-TRNA GLN AMIDOTRANSFERASE SUBUNIT B MITOCHONDRIAL AND PROKARYOTIC PET112-RELATED"/>
    <property type="match status" value="1"/>
</dbReference>
<dbReference type="PANTHER" id="PTHR11659:SF2">
    <property type="entry name" value="GLUTAMYL-TRNA(GLN) AMIDOTRANSFERASE SUBUNIT E"/>
    <property type="match status" value="1"/>
</dbReference>
<dbReference type="Pfam" id="PF02938">
    <property type="entry name" value="GAD"/>
    <property type="match status" value="1"/>
</dbReference>
<dbReference type="Pfam" id="PF02934">
    <property type="entry name" value="GatB_N"/>
    <property type="match status" value="1"/>
</dbReference>
<dbReference type="Pfam" id="PF02637">
    <property type="entry name" value="GatB_Yqey"/>
    <property type="match status" value="1"/>
</dbReference>
<dbReference type="SMART" id="SM00845">
    <property type="entry name" value="GatB_Yqey"/>
    <property type="match status" value="1"/>
</dbReference>
<dbReference type="SUPFAM" id="SSF55261">
    <property type="entry name" value="GAD domain-like"/>
    <property type="match status" value="1"/>
</dbReference>
<dbReference type="SUPFAM" id="SSF89095">
    <property type="entry name" value="GatB/YqeY motif"/>
    <property type="match status" value="1"/>
</dbReference>
<dbReference type="SUPFAM" id="SSF55931">
    <property type="entry name" value="Glutamine synthetase/guanido kinase"/>
    <property type="match status" value="1"/>
</dbReference>
<dbReference type="PROSITE" id="PS01234">
    <property type="entry name" value="GATB"/>
    <property type="match status" value="1"/>
</dbReference>
<name>GATE_HALMA</name>
<feature type="chain" id="PRO_1000025476" description="Glutamyl-tRNA(Gln) amidotransferase subunit E">
    <location>
        <begin position="1"/>
        <end position="623"/>
    </location>
</feature>
<proteinExistence type="inferred from homology"/>